<organism>
    <name type="scientific">Methanocaldococcus jannaschii (strain ATCC 43067 / DSM 2661 / JAL-1 / JCM 10045 / NBRC 100440)</name>
    <name type="common">Methanococcus jannaschii</name>
    <dbReference type="NCBI Taxonomy" id="243232"/>
    <lineage>
        <taxon>Archaea</taxon>
        <taxon>Methanobacteriati</taxon>
        <taxon>Methanobacteriota</taxon>
        <taxon>Methanomada group</taxon>
        <taxon>Methanococci</taxon>
        <taxon>Methanococcales</taxon>
        <taxon>Methanocaldococcaceae</taxon>
        <taxon>Methanocaldococcus</taxon>
    </lineage>
</organism>
<dbReference type="EC" id="6.3.4.13" evidence="2"/>
<dbReference type="EMBL" id="L77117">
    <property type="protein sequence ID" value="AAB98942.1"/>
    <property type="molecule type" value="Genomic_DNA"/>
</dbReference>
<dbReference type="PIR" id="A64417">
    <property type="entry name" value="A64417"/>
</dbReference>
<dbReference type="RefSeq" id="WP_010870451.1">
    <property type="nucleotide sequence ID" value="NC_000909.1"/>
</dbReference>
<dbReference type="SMR" id="Q58347"/>
<dbReference type="FunCoup" id="Q58347">
    <property type="interactions" value="104"/>
</dbReference>
<dbReference type="STRING" id="243232.MJ_0937"/>
<dbReference type="PaxDb" id="243232-MJ_0937"/>
<dbReference type="EnsemblBacteria" id="AAB98942">
    <property type="protein sequence ID" value="AAB98942"/>
    <property type="gene ID" value="MJ_0937"/>
</dbReference>
<dbReference type="GeneID" id="1451833"/>
<dbReference type="KEGG" id="mja:MJ_0937"/>
<dbReference type="eggNOG" id="arCOG04415">
    <property type="taxonomic scope" value="Archaea"/>
</dbReference>
<dbReference type="HOGENOM" id="CLU_027420_3_0_2"/>
<dbReference type="InParanoid" id="Q58347"/>
<dbReference type="OrthoDB" id="146558at2157"/>
<dbReference type="PhylomeDB" id="Q58347"/>
<dbReference type="UniPathway" id="UPA00074">
    <property type="reaction ID" value="UER00125"/>
</dbReference>
<dbReference type="Proteomes" id="UP000000805">
    <property type="component" value="Chromosome"/>
</dbReference>
<dbReference type="GO" id="GO:0005524">
    <property type="term" value="F:ATP binding"/>
    <property type="evidence" value="ECO:0007669"/>
    <property type="project" value="UniProtKB-KW"/>
</dbReference>
<dbReference type="GO" id="GO:0046872">
    <property type="term" value="F:metal ion binding"/>
    <property type="evidence" value="ECO:0007669"/>
    <property type="project" value="UniProtKB-KW"/>
</dbReference>
<dbReference type="GO" id="GO:0004637">
    <property type="term" value="F:phosphoribosylamine-glycine ligase activity"/>
    <property type="evidence" value="ECO:0007669"/>
    <property type="project" value="UniProtKB-UniRule"/>
</dbReference>
<dbReference type="GO" id="GO:0006189">
    <property type="term" value="P:'de novo' IMP biosynthetic process"/>
    <property type="evidence" value="ECO:0007669"/>
    <property type="project" value="UniProtKB-UniRule"/>
</dbReference>
<dbReference type="GO" id="GO:0009113">
    <property type="term" value="P:purine nucleobase biosynthetic process"/>
    <property type="evidence" value="ECO:0007669"/>
    <property type="project" value="InterPro"/>
</dbReference>
<dbReference type="Gene3D" id="3.40.50.20">
    <property type="match status" value="1"/>
</dbReference>
<dbReference type="Gene3D" id="3.30.1490.20">
    <property type="entry name" value="ATP-grasp fold, A domain"/>
    <property type="match status" value="1"/>
</dbReference>
<dbReference type="Gene3D" id="3.30.470.20">
    <property type="entry name" value="ATP-grasp fold, B domain"/>
    <property type="match status" value="1"/>
</dbReference>
<dbReference type="Gene3D" id="3.90.600.10">
    <property type="entry name" value="Phosphoribosylglycinamide synthetase, C-terminal domain"/>
    <property type="match status" value="1"/>
</dbReference>
<dbReference type="HAMAP" id="MF_00138">
    <property type="entry name" value="GARS"/>
    <property type="match status" value="1"/>
</dbReference>
<dbReference type="InterPro" id="IPR011761">
    <property type="entry name" value="ATP-grasp"/>
</dbReference>
<dbReference type="InterPro" id="IPR013815">
    <property type="entry name" value="ATP_grasp_subdomain_1"/>
</dbReference>
<dbReference type="InterPro" id="IPR016185">
    <property type="entry name" value="PreATP-grasp_dom_sf"/>
</dbReference>
<dbReference type="InterPro" id="IPR020561">
    <property type="entry name" value="PRibGlycinamid_synth_ATP-grasp"/>
</dbReference>
<dbReference type="InterPro" id="IPR000115">
    <property type="entry name" value="PRibGlycinamide_synth"/>
</dbReference>
<dbReference type="InterPro" id="IPR020560">
    <property type="entry name" value="PRibGlycinamide_synth_C-dom"/>
</dbReference>
<dbReference type="InterPro" id="IPR037123">
    <property type="entry name" value="PRibGlycinamide_synth_C_sf"/>
</dbReference>
<dbReference type="InterPro" id="IPR020559">
    <property type="entry name" value="PRibGlycinamide_synth_CS"/>
</dbReference>
<dbReference type="InterPro" id="IPR020562">
    <property type="entry name" value="PRibGlycinamide_synth_N"/>
</dbReference>
<dbReference type="InterPro" id="IPR011054">
    <property type="entry name" value="Rudment_hybrid_motif"/>
</dbReference>
<dbReference type="NCBIfam" id="TIGR00877">
    <property type="entry name" value="purD"/>
    <property type="match status" value="1"/>
</dbReference>
<dbReference type="PANTHER" id="PTHR43472">
    <property type="entry name" value="PHOSPHORIBOSYLAMINE--GLYCINE LIGASE"/>
    <property type="match status" value="1"/>
</dbReference>
<dbReference type="PANTHER" id="PTHR43472:SF1">
    <property type="entry name" value="PHOSPHORIBOSYLAMINE--GLYCINE LIGASE, CHLOROPLASTIC"/>
    <property type="match status" value="1"/>
</dbReference>
<dbReference type="Pfam" id="PF01071">
    <property type="entry name" value="GARS_A"/>
    <property type="match status" value="1"/>
</dbReference>
<dbReference type="Pfam" id="PF02843">
    <property type="entry name" value="GARS_C"/>
    <property type="match status" value="1"/>
</dbReference>
<dbReference type="Pfam" id="PF02844">
    <property type="entry name" value="GARS_N"/>
    <property type="match status" value="1"/>
</dbReference>
<dbReference type="SMART" id="SM01209">
    <property type="entry name" value="GARS_A"/>
    <property type="match status" value="1"/>
</dbReference>
<dbReference type="SMART" id="SM01210">
    <property type="entry name" value="GARS_C"/>
    <property type="match status" value="1"/>
</dbReference>
<dbReference type="SUPFAM" id="SSF56059">
    <property type="entry name" value="Glutathione synthetase ATP-binding domain-like"/>
    <property type="match status" value="1"/>
</dbReference>
<dbReference type="SUPFAM" id="SSF52440">
    <property type="entry name" value="PreATP-grasp domain"/>
    <property type="match status" value="1"/>
</dbReference>
<dbReference type="SUPFAM" id="SSF51246">
    <property type="entry name" value="Rudiment single hybrid motif"/>
    <property type="match status" value="1"/>
</dbReference>
<dbReference type="PROSITE" id="PS50975">
    <property type="entry name" value="ATP_GRASP"/>
    <property type="match status" value="1"/>
</dbReference>
<dbReference type="PROSITE" id="PS00184">
    <property type="entry name" value="GARS"/>
    <property type="match status" value="1"/>
</dbReference>
<name>PUR2_METJA</name>
<accession>Q58347</accession>
<protein>
    <recommendedName>
        <fullName evidence="2">Phosphoribosylamine--glycine ligase</fullName>
        <ecNumber evidence="2">6.3.4.13</ecNumber>
    </recommendedName>
    <alternativeName>
        <fullName evidence="2">GARS</fullName>
    </alternativeName>
    <alternativeName>
        <fullName evidence="2">Glycinamide ribonucleotide synthetase</fullName>
    </alternativeName>
    <alternativeName>
        <fullName evidence="2">Phosphoribosylglycinamide synthetase</fullName>
    </alternativeName>
</protein>
<comment type="catalytic activity">
    <reaction evidence="2">
        <text>5-phospho-beta-D-ribosylamine + glycine + ATP = N(1)-(5-phospho-beta-D-ribosyl)glycinamide + ADP + phosphate + H(+)</text>
        <dbReference type="Rhea" id="RHEA:17453"/>
        <dbReference type="ChEBI" id="CHEBI:15378"/>
        <dbReference type="ChEBI" id="CHEBI:30616"/>
        <dbReference type="ChEBI" id="CHEBI:43474"/>
        <dbReference type="ChEBI" id="CHEBI:57305"/>
        <dbReference type="ChEBI" id="CHEBI:58681"/>
        <dbReference type="ChEBI" id="CHEBI:143788"/>
        <dbReference type="ChEBI" id="CHEBI:456216"/>
        <dbReference type="EC" id="6.3.4.13"/>
    </reaction>
</comment>
<comment type="cofactor">
    <cofactor evidence="1">
        <name>Mg(2+)</name>
        <dbReference type="ChEBI" id="CHEBI:18420"/>
    </cofactor>
    <cofactor evidence="1">
        <name>Mn(2+)</name>
        <dbReference type="ChEBI" id="CHEBI:29035"/>
    </cofactor>
    <text evidence="1">Binds 2 magnesium or manganese ions per subunit.</text>
</comment>
<comment type="pathway">
    <text evidence="2">Purine metabolism; IMP biosynthesis via de novo pathway; N(1)-(5-phospho-D-ribosyl)glycinamide from 5-phospho-alpha-D-ribose 1-diphosphate: step 2/2.</text>
</comment>
<comment type="similarity">
    <text evidence="2">Belongs to the GARS family.</text>
</comment>
<feature type="chain" id="PRO_0000151510" description="Phosphoribosylamine--glycine ligase">
    <location>
        <begin position="1"/>
        <end position="444"/>
    </location>
</feature>
<feature type="domain" description="ATP-grasp" evidence="2">
    <location>
        <begin position="109"/>
        <end position="324"/>
    </location>
</feature>
<feature type="binding site" evidence="2">
    <location>
        <begin position="140"/>
        <end position="202"/>
    </location>
    <ligand>
        <name>ATP</name>
        <dbReference type="ChEBI" id="CHEBI:30616"/>
    </ligand>
</feature>
<feature type="binding site" evidence="2">
    <location>
        <position position="282"/>
    </location>
    <ligand>
        <name>Mg(2+)</name>
        <dbReference type="ChEBI" id="CHEBI:18420"/>
        <label>1</label>
    </ligand>
</feature>
<feature type="binding site" evidence="2">
    <location>
        <position position="282"/>
    </location>
    <ligand>
        <name>Mn(2+)</name>
        <dbReference type="ChEBI" id="CHEBI:29035"/>
        <label>1</label>
    </ligand>
</feature>
<feature type="binding site" evidence="2">
    <location>
        <position position="294"/>
    </location>
    <ligand>
        <name>Mg(2+)</name>
        <dbReference type="ChEBI" id="CHEBI:18420"/>
        <label>1</label>
    </ligand>
</feature>
<feature type="binding site" evidence="2">
    <location>
        <position position="294"/>
    </location>
    <ligand>
        <name>Mg(2+)</name>
        <dbReference type="ChEBI" id="CHEBI:18420"/>
        <label>2</label>
    </ligand>
</feature>
<feature type="binding site" evidence="2">
    <location>
        <position position="294"/>
    </location>
    <ligand>
        <name>Mn(2+)</name>
        <dbReference type="ChEBI" id="CHEBI:29035"/>
        <label>1</label>
    </ligand>
</feature>
<feature type="binding site" evidence="2">
    <location>
        <position position="294"/>
    </location>
    <ligand>
        <name>Mn(2+)</name>
        <dbReference type="ChEBI" id="CHEBI:29035"/>
        <label>2</label>
    </ligand>
</feature>
<feature type="binding site" evidence="2">
    <location>
        <position position="296"/>
    </location>
    <ligand>
        <name>Mg(2+)</name>
        <dbReference type="ChEBI" id="CHEBI:18420"/>
        <label>2</label>
    </ligand>
</feature>
<feature type="binding site" evidence="2">
    <location>
        <position position="296"/>
    </location>
    <ligand>
        <name>Mn(2+)</name>
        <dbReference type="ChEBI" id="CHEBI:29035"/>
        <label>2</label>
    </ligand>
</feature>
<sequence length="444" mass="49098">MKILLIGGGARESAIAHALKKNEEVKLYTLMKNKNPGIARLSEEIKLAKETDLDAVKEFAEKVKPDLAVIGPEAPLGEGVVDLLEEMGISAVGPKKLAAQIETNKEFMRNLFKKYNIKGSLMYKAFEEYGEELESFIDELTEKGIKAVVKPVGLTGGKGVKVVGEQLKDNEEAKKYAKEIFETGLGGGKVLIEEKLEGVEFTLHGFVDGDTIKFTPFVQDHPHALEGDEGSITGGMGSYSCPDHKLPFMTEEDVKLAKEIMEETVKALKEEVGGYKGILYGQFMLTKEGPKIIEYNARFGDPEAMNLLAILKNDFLEVCEAIVNKKLKDIDVEFENKATVCKYVVPKGYPDNPVRGEPITVDEEAIKKTGAILHYASVNEDNGSLYMTGSRAVAVVGVADTIEEAERIAEEATKYIKGEVYHRSDIGKKELIKKRIEKMNELRR</sequence>
<evidence type="ECO:0000250" key="1"/>
<evidence type="ECO:0000255" key="2">
    <source>
        <dbReference type="HAMAP-Rule" id="MF_00138"/>
    </source>
</evidence>
<gene>
    <name evidence="2" type="primary">purD</name>
    <name type="ordered locus">MJ0937</name>
</gene>
<reference key="1">
    <citation type="journal article" date="1996" name="Science">
        <title>Complete genome sequence of the methanogenic archaeon, Methanococcus jannaschii.</title>
        <authorList>
            <person name="Bult C.J."/>
            <person name="White O."/>
            <person name="Olsen G.J."/>
            <person name="Zhou L."/>
            <person name="Fleischmann R.D."/>
            <person name="Sutton G.G."/>
            <person name="Blake J.A."/>
            <person name="FitzGerald L.M."/>
            <person name="Clayton R.A."/>
            <person name="Gocayne J.D."/>
            <person name="Kerlavage A.R."/>
            <person name="Dougherty B.A."/>
            <person name="Tomb J.-F."/>
            <person name="Adams M.D."/>
            <person name="Reich C.I."/>
            <person name="Overbeek R."/>
            <person name="Kirkness E.F."/>
            <person name="Weinstock K.G."/>
            <person name="Merrick J.M."/>
            <person name="Glodek A."/>
            <person name="Scott J.L."/>
            <person name="Geoghagen N.S.M."/>
            <person name="Weidman J.F."/>
            <person name="Fuhrmann J.L."/>
            <person name="Nguyen D."/>
            <person name="Utterback T.R."/>
            <person name="Kelley J.M."/>
            <person name="Peterson J.D."/>
            <person name="Sadow P.W."/>
            <person name="Hanna M.C."/>
            <person name="Cotton M.D."/>
            <person name="Roberts K.M."/>
            <person name="Hurst M.A."/>
            <person name="Kaine B.P."/>
            <person name="Borodovsky M."/>
            <person name="Klenk H.-P."/>
            <person name="Fraser C.M."/>
            <person name="Smith H.O."/>
            <person name="Woese C.R."/>
            <person name="Venter J.C."/>
        </authorList>
    </citation>
    <scope>NUCLEOTIDE SEQUENCE [LARGE SCALE GENOMIC DNA]</scope>
    <source>
        <strain>ATCC 43067 / DSM 2661 / JAL-1 / JCM 10045 / NBRC 100440</strain>
    </source>
</reference>
<keyword id="KW-0067">ATP-binding</keyword>
<keyword id="KW-0436">Ligase</keyword>
<keyword id="KW-0460">Magnesium</keyword>
<keyword id="KW-0464">Manganese</keyword>
<keyword id="KW-0479">Metal-binding</keyword>
<keyword id="KW-0547">Nucleotide-binding</keyword>
<keyword id="KW-0658">Purine biosynthesis</keyword>
<keyword id="KW-1185">Reference proteome</keyword>
<proteinExistence type="inferred from homology"/>